<name>Y1380_NEIMF</name>
<proteinExistence type="inferred from homology"/>
<comment type="function">
    <text evidence="1">Binds to DNA and alters its conformation. May be involved in regulation of gene expression, nucleoid organization and DNA protection.</text>
</comment>
<comment type="subunit">
    <text evidence="1">Homodimer.</text>
</comment>
<comment type="subcellular location">
    <subcellularLocation>
        <location evidence="1">Cytoplasm</location>
        <location evidence="1">Nucleoid</location>
    </subcellularLocation>
</comment>
<comment type="similarity">
    <text evidence="1">Belongs to the YbaB/EbfC family.</text>
</comment>
<feature type="chain" id="PRO_1000003783" description="Nucleoid-associated protein NMC1380">
    <location>
        <begin position="1"/>
        <end position="111"/>
    </location>
</feature>
<dbReference type="EMBL" id="AM421808">
    <property type="protein sequence ID" value="CAM10596.1"/>
    <property type="molecule type" value="Genomic_DNA"/>
</dbReference>
<dbReference type="RefSeq" id="WP_002219073.1">
    <property type="nucleotide sequence ID" value="NC_008767.1"/>
</dbReference>
<dbReference type="SMR" id="A1KUP8"/>
<dbReference type="KEGG" id="nmc:NMC1380"/>
<dbReference type="HOGENOM" id="CLU_140930_0_0_4"/>
<dbReference type="Proteomes" id="UP000002286">
    <property type="component" value="Chromosome"/>
</dbReference>
<dbReference type="GO" id="GO:0043590">
    <property type="term" value="C:bacterial nucleoid"/>
    <property type="evidence" value="ECO:0007669"/>
    <property type="project" value="UniProtKB-UniRule"/>
</dbReference>
<dbReference type="GO" id="GO:0005829">
    <property type="term" value="C:cytosol"/>
    <property type="evidence" value="ECO:0007669"/>
    <property type="project" value="TreeGrafter"/>
</dbReference>
<dbReference type="GO" id="GO:0003677">
    <property type="term" value="F:DNA binding"/>
    <property type="evidence" value="ECO:0007669"/>
    <property type="project" value="UniProtKB-UniRule"/>
</dbReference>
<dbReference type="FunFam" id="3.30.1310.10:FF:000007">
    <property type="entry name" value="Nucleoid-associated protein NMC1380"/>
    <property type="match status" value="1"/>
</dbReference>
<dbReference type="Gene3D" id="3.30.1310.10">
    <property type="entry name" value="Nucleoid-associated protein YbaB-like domain"/>
    <property type="match status" value="1"/>
</dbReference>
<dbReference type="HAMAP" id="MF_00274">
    <property type="entry name" value="DNA_YbaB_EbfC"/>
    <property type="match status" value="1"/>
</dbReference>
<dbReference type="InterPro" id="IPR036894">
    <property type="entry name" value="YbaB-like_sf"/>
</dbReference>
<dbReference type="InterPro" id="IPR004401">
    <property type="entry name" value="YbaB/EbfC"/>
</dbReference>
<dbReference type="NCBIfam" id="TIGR00103">
    <property type="entry name" value="DNA_YbaB_EbfC"/>
    <property type="match status" value="1"/>
</dbReference>
<dbReference type="PANTHER" id="PTHR33449">
    <property type="entry name" value="NUCLEOID-ASSOCIATED PROTEIN YBAB"/>
    <property type="match status" value="1"/>
</dbReference>
<dbReference type="PANTHER" id="PTHR33449:SF1">
    <property type="entry name" value="NUCLEOID-ASSOCIATED PROTEIN YBAB"/>
    <property type="match status" value="1"/>
</dbReference>
<dbReference type="Pfam" id="PF02575">
    <property type="entry name" value="YbaB_DNA_bd"/>
    <property type="match status" value="1"/>
</dbReference>
<dbReference type="PIRSF" id="PIRSF004555">
    <property type="entry name" value="UCP004555"/>
    <property type="match status" value="1"/>
</dbReference>
<dbReference type="SUPFAM" id="SSF82607">
    <property type="entry name" value="YbaB-like"/>
    <property type="match status" value="1"/>
</dbReference>
<protein>
    <recommendedName>
        <fullName evidence="1">Nucleoid-associated protein NMC1380</fullName>
    </recommendedName>
</protein>
<reference key="1">
    <citation type="journal article" date="2007" name="PLoS Genet.">
        <title>Meningococcal genetic variation mechanisms viewed through comparative analysis of serogroup C strain FAM18.</title>
        <authorList>
            <person name="Bentley S.D."/>
            <person name="Vernikos G.S."/>
            <person name="Snyder L.A.S."/>
            <person name="Churcher C."/>
            <person name="Arrowsmith C."/>
            <person name="Chillingworth T."/>
            <person name="Cronin A."/>
            <person name="Davis P.H."/>
            <person name="Holroyd N.E."/>
            <person name="Jagels K."/>
            <person name="Maddison M."/>
            <person name="Moule S."/>
            <person name="Rabbinowitsch E."/>
            <person name="Sharp S."/>
            <person name="Unwin L."/>
            <person name="Whitehead S."/>
            <person name="Quail M.A."/>
            <person name="Achtman M."/>
            <person name="Barrell B.G."/>
            <person name="Saunders N.J."/>
            <person name="Parkhill J."/>
        </authorList>
    </citation>
    <scope>NUCLEOTIDE SEQUENCE [LARGE SCALE GENOMIC DNA]</scope>
    <source>
        <strain>ATCC 700532 / DSM 15464 / FAM18</strain>
    </source>
</reference>
<accession>A1KUP8</accession>
<keyword id="KW-0963">Cytoplasm</keyword>
<keyword id="KW-0238">DNA-binding</keyword>
<evidence type="ECO:0000255" key="1">
    <source>
        <dbReference type="HAMAP-Rule" id="MF_00274"/>
    </source>
</evidence>
<gene>
    <name type="ordered locus">NMC1380</name>
</gene>
<sequence length="111" mass="11925">MFGKAGLGGLMKQAQQMQENMKKAQAKLAETEIEGEAGNGLVKITMTCAHEVRKIDISPDLIQEAADDKEMLEDLILAALKSARGKAEETANKTMGAFTQGLPPGVGDFFR</sequence>
<organism>
    <name type="scientific">Neisseria meningitidis serogroup C / serotype 2a (strain ATCC 700532 / DSM 15464 / FAM18)</name>
    <dbReference type="NCBI Taxonomy" id="272831"/>
    <lineage>
        <taxon>Bacteria</taxon>
        <taxon>Pseudomonadati</taxon>
        <taxon>Pseudomonadota</taxon>
        <taxon>Betaproteobacteria</taxon>
        <taxon>Neisseriales</taxon>
        <taxon>Neisseriaceae</taxon>
        <taxon>Neisseria</taxon>
    </lineage>
</organism>